<name>RL6_AERPE</name>
<keyword id="KW-1185">Reference proteome</keyword>
<keyword id="KW-0687">Ribonucleoprotein</keyword>
<keyword id="KW-0689">Ribosomal protein</keyword>
<keyword id="KW-0694">RNA-binding</keyword>
<keyword id="KW-0699">rRNA-binding</keyword>
<protein>
    <recommendedName>
        <fullName evidence="1">Large ribosomal subunit protein uL6</fullName>
    </recommendedName>
    <alternativeName>
        <fullName evidence="2">50S ribosomal protein L6</fullName>
    </alternativeName>
</protein>
<proteinExistence type="inferred from homology"/>
<reference key="1">
    <citation type="journal article" date="1999" name="DNA Res.">
        <title>Complete genome sequence of an aerobic hyper-thermophilic crenarchaeon, Aeropyrum pernix K1.</title>
        <authorList>
            <person name="Kawarabayasi Y."/>
            <person name="Hino Y."/>
            <person name="Horikawa H."/>
            <person name="Yamazaki S."/>
            <person name="Haikawa Y."/>
            <person name="Jin-no K."/>
            <person name="Takahashi M."/>
            <person name="Sekine M."/>
            <person name="Baba S."/>
            <person name="Ankai A."/>
            <person name="Kosugi H."/>
            <person name="Hosoyama A."/>
            <person name="Fukui S."/>
            <person name="Nagai Y."/>
            <person name="Nishijima K."/>
            <person name="Nakazawa H."/>
            <person name="Takamiya M."/>
            <person name="Masuda S."/>
            <person name="Funahashi T."/>
            <person name="Tanaka T."/>
            <person name="Kudoh Y."/>
            <person name="Yamazaki J."/>
            <person name="Kushida N."/>
            <person name="Oguchi A."/>
            <person name="Aoki K."/>
            <person name="Kubota K."/>
            <person name="Nakamura Y."/>
            <person name="Nomura N."/>
            <person name="Sako Y."/>
            <person name="Kikuchi H."/>
        </authorList>
    </citation>
    <scope>NUCLEOTIDE SEQUENCE [LARGE SCALE GENOMIC DNA]</scope>
    <source>
        <strain>ATCC 700893 / DSM 11879 / JCM 9820 / NBRC 100138 / K1</strain>
    </source>
</reference>
<feature type="chain" id="PRO_0000131081" description="Large ribosomal subunit protein uL6">
    <location>
        <begin position="1"/>
        <end position="182"/>
    </location>
</feature>
<gene>
    <name evidence="1" type="primary">rpl6</name>
    <name type="ordered locus">APE_0350</name>
</gene>
<organism>
    <name type="scientific">Aeropyrum pernix (strain ATCC 700893 / DSM 11879 / JCM 9820 / NBRC 100138 / K1)</name>
    <dbReference type="NCBI Taxonomy" id="272557"/>
    <lineage>
        <taxon>Archaea</taxon>
        <taxon>Thermoproteota</taxon>
        <taxon>Thermoprotei</taxon>
        <taxon>Desulfurococcales</taxon>
        <taxon>Desulfurococcaceae</taxon>
        <taxon>Aeropyrum</taxon>
    </lineage>
</organism>
<evidence type="ECO:0000255" key="1">
    <source>
        <dbReference type="HAMAP-Rule" id="MF_01365"/>
    </source>
</evidence>
<evidence type="ECO:0000305" key="2"/>
<comment type="function">
    <text evidence="1">This protein binds to the 23S rRNA, and is important in its secondary structure. It is located near the subunit interface in the base of the L7/L12 stalk, and near the tRNA binding site of the peptidyltransferase center.</text>
</comment>
<comment type="subunit">
    <text evidence="1">Part of the 50S ribosomal subunit.</text>
</comment>
<comment type="similarity">
    <text evidence="1">Belongs to the universal ribosomal protein uL6 family.</text>
</comment>
<accession>Q9YF91</accession>
<dbReference type="EMBL" id="BA000002">
    <property type="protein sequence ID" value="BAA79305.1"/>
    <property type="molecule type" value="Genomic_DNA"/>
</dbReference>
<dbReference type="PIR" id="E72726">
    <property type="entry name" value="E72726"/>
</dbReference>
<dbReference type="RefSeq" id="WP_010865684.1">
    <property type="nucleotide sequence ID" value="NC_000854.2"/>
</dbReference>
<dbReference type="SMR" id="Q9YF91"/>
<dbReference type="STRING" id="272557.APE_0350"/>
<dbReference type="EnsemblBacteria" id="BAA79305">
    <property type="protein sequence ID" value="BAA79305"/>
    <property type="gene ID" value="APE_0350"/>
</dbReference>
<dbReference type="GeneID" id="1444568"/>
<dbReference type="KEGG" id="ape:APE_0350"/>
<dbReference type="PATRIC" id="fig|272557.25.peg.270"/>
<dbReference type="eggNOG" id="arCOG04090">
    <property type="taxonomic scope" value="Archaea"/>
</dbReference>
<dbReference type="Proteomes" id="UP000002518">
    <property type="component" value="Chromosome"/>
</dbReference>
<dbReference type="GO" id="GO:0022625">
    <property type="term" value="C:cytosolic large ribosomal subunit"/>
    <property type="evidence" value="ECO:0007669"/>
    <property type="project" value="TreeGrafter"/>
</dbReference>
<dbReference type="GO" id="GO:0019843">
    <property type="term" value="F:rRNA binding"/>
    <property type="evidence" value="ECO:0007669"/>
    <property type="project" value="UniProtKB-UniRule"/>
</dbReference>
<dbReference type="GO" id="GO:0003735">
    <property type="term" value="F:structural constituent of ribosome"/>
    <property type="evidence" value="ECO:0007669"/>
    <property type="project" value="InterPro"/>
</dbReference>
<dbReference type="GO" id="GO:0002181">
    <property type="term" value="P:cytoplasmic translation"/>
    <property type="evidence" value="ECO:0007669"/>
    <property type="project" value="TreeGrafter"/>
</dbReference>
<dbReference type="FunFam" id="3.90.930.12:FF:000008">
    <property type="entry name" value="50S ribosomal protein L6"/>
    <property type="match status" value="1"/>
</dbReference>
<dbReference type="Gene3D" id="3.90.930.12">
    <property type="entry name" value="Ribosomal protein L6, alpha-beta domain"/>
    <property type="match status" value="2"/>
</dbReference>
<dbReference type="HAMAP" id="MF_01365_A">
    <property type="entry name" value="Ribosomal_uL6_A"/>
    <property type="match status" value="1"/>
</dbReference>
<dbReference type="InterPro" id="IPR000702">
    <property type="entry name" value="Ribosomal_uL6-like"/>
</dbReference>
<dbReference type="InterPro" id="IPR036789">
    <property type="entry name" value="Ribosomal_uL6-like_a/b-dom_sf"/>
</dbReference>
<dbReference type="InterPro" id="IPR020040">
    <property type="entry name" value="Ribosomal_uL6_a/b-dom"/>
</dbReference>
<dbReference type="InterPro" id="IPR019907">
    <property type="entry name" value="Ribosomal_uL6_arc"/>
</dbReference>
<dbReference type="InterPro" id="IPR002359">
    <property type="entry name" value="Ribosomal_uL6_CS2"/>
</dbReference>
<dbReference type="NCBIfam" id="NF004037">
    <property type="entry name" value="PRK05518.1"/>
    <property type="match status" value="1"/>
</dbReference>
<dbReference type="NCBIfam" id="TIGR03653">
    <property type="entry name" value="uL6_arch"/>
    <property type="match status" value="1"/>
</dbReference>
<dbReference type="PANTHER" id="PTHR11655:SF16">
    <property type="entry name" value="60S RIBOSOMAL PROTEIN L9"/>
    <property type="match status" value="1"/>
</dbReference>
<dbReference type="PANTHER" id="PTHR11655">
    <property type="entry name" value="60S/50S RIBOSOMAL PROTEIN L6/L9"/>
    <property type="match status" value="1"/>
</dbReference>
<dbReference type="Pfam" id="PF00347">
    <property type="entry name" value="Ribosomal_L6"/>
    <property type="match status" value="2"/>
</dbReference>
<dbReference type="PIRSF" id="PIRSF002162">
    <property type="entry name" value="Ribosomal_L6"/>
    <property type="match status" value="1"/>
</dbReference>
<dbReference type="SUPFAM" id="SSF56053">
    <property type="entry name" value="Ribosomal protein L6"/>
    <property type="match status" value="2"/>
</dbReference>
<dbReference type="PROSITE" id="PS00700">
    <property type="entry name" value="RIBOSOMAL_L6_2"/>
    <property type="match status" value="1"/>
</dbReference>
<sequence>MAKDVHVVERVEVPEGVTVSIDGMRVKVSGPKGEVERDFSHARGVLIRLEDNSVVVESFFAKARQRALVGAIAGHIRNMIKGVQGGFRYKLKIMYSHFPINVKVEGDKFIISNFLGEKGLRIARIMPGVKVQVKGSDVIVEGIDVEKVAQTAANIELATKVKDKDRRKFMDGIYIYEREVIA</sequence>